<reference key="1">
    <citation type="submission" date="2006-10" db="EMBL/GenBank/DDBJ databases">
        <title>Complete sequence of Methanosaeta thermophila PT.</title>
        <authorList>
            <consortium name="US DOE Joint Genome Institute"/>
            <person name="Copeland A."/>
            <person name="Lucas S."/>
            <person name="Lapidus A."/>
            <person name="Barry K."/>
            <person name="Detter J.C."/>
            <person name="Glavina del Rio T."/>
            <person name="Hammon N."/>
            <person name="Israni S."/>
            <person name="Pitluck S."/>
            <person name="Chain P."/>
            <person name="Malfatti S."/>
            <person name="Shin M."/>
            <person name="Vergez L."/>
            <person name="Schmutz J."/>
            <person name="Larimer F."/>
            <person name="Land M."/>
            <person name="Hauser L."/>
            <person name="Kyrpides N."/>
            <person name="Kim E."/>
            <person name="Smith K.S."/>
            <person name="Ingram-Smith C."/>
            <person name="Richardson P."/>
        </authorList>
    </citation>
    <scope>NUCLEOTIDE SEQUENCE [LARGE SCALE GENOMIC DNA]</scope>
    <source>
        <strain>DSM 6194 / JCM 14653 / NBRC 101360 / PT</strain>
    </source>
</reference>
<comment type="function">
    <text evidence="1">Catalyzes the ATP-dependent conversion of 7-carboxy-7-deazaguanine (CDG) to 7-cyano-7-deazaguanine (preQ(0)).</text>
</comment>
<comment type="catalytic activity">
    <reaction evidence="1">
        <text>7-carboxy-7-deazaguanine + NH4(+) + ATP = 7-cyano-7-deazaguanine + ADP + phosphate + H2O + H(+)</text>
        <dbReference type="Rhea" id="RHEA:27982"/>
        <dbReference type="ChEBI" id="CHEBI:15377"/>
        <dbReference type="ChEBI" id="CHEBI:15378"/>
        <dbReference type="ChEBI" id="CHEBI:28938"/>
        <dbReference type="ChEBI" id="CHEBI:30616"/>
        <dbReference type="ChEBI" id="CHEBI:43474"/>
        <dbReference type="ChEBI" id="CHEBI:45075"/>
        <dbReference type="ChEBI" id="CHEBI:61036"/>
        <dbReference type="ChEBI" id="CHEBI:456216"/>
        <dbReference type="EC" id="6.3.4.20"/>
    </reaction>
</comment>
<comment type="cofactor">
    <cofactor evidence="1">
        <name>Zn(2+)</name>
        <dbReference type="ChEBI" id="CHEBI:29105"/>
    </cofactor>
    <text evidence="1">Binds 1 zinc ion per subunit.</text>
</comment>
<comment type="pathway">
    <text evidence="1">Purine metabolism; 7-cyano-7-deazaguanine biosynthesis.</text>
</comment>
<comment type="similarity">
    <text evidence="1">Belongs to the QueC family.</text>
</comment>
<organism>
    <name type="scientific">Methanothrix thermoacetophila (strain DSM 6194 / JCM 14653 / NBRC 101360 / PT)</name>
    <name type="common">Methanosaeta thermophila</name>
    <dbReference type="NCBI Taxonomy" id="349307"/>
    <lineage>
        <taxon>Archaea</taxon>
        <taxon>Methanobacteriati</taxon>
        <taxon>Methanobacteriota</taxon>
        <taxon>Stenosarchaea group</taxon>
        <taxon>Methanomicrobia</taxon>
        <taxon>Methanotrichales</taxon>
        <taxon>Methanotrichaceae</taxon>
        <taxon>Methanothrix</taxon>
    </lineage>
</organism>
<proteinExistence type="inferred from homology"/>
<feature type="chain" id="PRO_0000336968" description="7-cyano-7-deazaguanine synthase">
    <location>
        <begin position="1"/>
        <end position="224"/>
    </location>
</feature>
<feature type="binding site" evidence="1">
    <location>
        <begin position="8"/>
        <end position="18"/>
    </location>
    <ligand>
        <name>ATP</name>
        <dbReference type="ChEBI" id="CHEBI:30616"/>
    </ligand>
</feature>
<feature type="binding site" evidence="1">
    <location>
        <position position="190"/>
    </location>
    <ligand>
        <name>Zn(2+)</name>
        <dbReference type="ChEBI" id="CHEBI:29105"/>
    </ligand>
</feature>
<feature type="binding site" evidence="1">
    <location>
        <position position="198"/>
    </location>
    <ligand>
        <name>Zn(2+)</name>
        <dbReference type="ChEBI" id="CHEBI:29105"/>
    </ligand>
</feature>
<feature type="binding site" evidence="1">
    <location>
        <position position="201"/>
    </location>
    <ligand>
        <name>Zn(2+)</name>
        <dbReference type="ChEBI" id="CHEBI:29105"/>
    </ligand>
</feature>
<feature type="binding site" evidence="1">
    <location>
        <position position="204"/>
    </location>
    <ligand>
        <name>Zn(2+)</name>
        <dbReference type="ChEBI" id="CHEBI:29105"/>
    </ligand>
</feature>
<name>QUEC_METTP</name>
<dbReference type="EC" id="6.3.4.20" evidence="1"/>
<dbReference type="EMBL" id="CP000477">
    <property type="protein sequence ID" value="ABK14230.1"/>
    <property type="molecule type" value="Genomic_DNA"/>
</dbReference>
<dbReference type="RefSeq" id="WP_011695628.1">
    <property type="nucleotide sequence ID" value="NC_008553.1"/>
</dbReference>
<dbReference type="SMR" id="A0B6A6"/>
<dbReference type="STRING" id="349307.Mthe_0438"/>
<dbReference type="GeneID" id="4462578"/>
<dbReference type="KEGG" id="mtp:Mthe_0438"/>
<dbReference type="HOGENOM" id="CLU_081854_1_0_2"/>
<dbReference type="OrthoDB" id="6532at2157"/>
<dbReference type="UniPathway" id="UPA00391"/>
<dbReference type="Proteomes" id="UP000000674">
    <property type="component" value="Chromosome"/>
</dbReference>
<dbReference type="GO" id="GO:0005524">
    <property type="term" value="F:ATP binding"/>
    <property type="evidence" value="ECO:0007669"/>
    <property type="project" value="UniProtKB-UniRule"/>
</dbReference>
<dbReference type="GO" id="GO:0016879">
    <property type="term" value="F:ligase activity, forming carbon-nitrogen bonds"/>
    <property type="evidence" value="ECO:0007669"/>
    <property type="project" value="UniProtKB-UniRule"/>
</dbReference>
<dbReference type="GO" id="GO:0008270">
    <property type="term" value="F:zinc ion binding"/>
    <property type="evidence" value="ECO:0007669"/>
    <property type="project" value="UniProtKB-UniRule"/>
</dbReference>
<dbReference type="CDD" id="cd01995">
    <property type="entry name" value="QueC-like"/>
    <property type="match status" value="1"/>
</dbReference>
<dbReference type="Gene3D" id="3.40.50.620">
    <property type="entry name" value="HUPs"/>
    <property type="match status" value="1"/>
</dbReference>
<dbReference type="HAMAP" id="MF_01633">
    <property type="entry name" value="QueC"/>
    <property type="match status" value="1"/>
</dbReference>
<dbReference type="InterPro" id="IPR018317">
    <property type="entry name" value="QueC"/>
</dbReference>
<dbReference type="InterPro" id="IPR014729">
    <property type="entry name" value="Rossmann-like_a/b/a_fold"/>
</dbReference>
<dbReference type="NCBIfam" id="TIGR00364">
    <property type="entry name" value="7-cyano-7-deazaguanine synthase QueC"/>
    <property type="match status" value="1"/>
</dbReference>
<dbReference type="PANTHER" id="PTHR42914">
    <property type="entry name" value="7-CYANO-7-DEAZAGUANINE SYNTHASE"/>
    <property type="match status" value="1"/>
</dbReference>
<dbReference type="PANTHER" id="PTHR42914:SF1">
    <property type="entry name" value="7-CYANO-7-DEAZAGUANINE SYNTHASE"/>
    <property type="match status" value="1"/>
</dbReference>
<dbReference type="Pfam" id="PF06508">
    <property type="entry name" value="QueC"/>
    <property type="match status" value="1"/>
</dbReference>
<dbReference type="PIRSF" id="PIRSF006293">
    <property type="entry name" value="ExsB"/>
    <property type="match status" value="1"/>
</dbReference>
<dbReference type="SUPFAM" id="SSF52402">
    <property type="entry name" value="Adenine nucleotide alpha hydrolases-like"/>
    <property type="match status" value="1"/>
</dbReference>
<protein>
    <recommendedName>
        <fullName evidence="1">7-cyano-7-deazaguanine synthase</fullName>
        <ecNumber evidence="1">6.3.4.20</ecNumber>
    </recommendedName>
    <alternativeName>
        <fullName evidence="1">7-cyano-7-carbaguanine synthase</fullName>
    </alternativeName>
    <alternativeName>
        <fullName evidence="1">Archaeosine biosynthesis protein QueC</fullName>
    </alternativeName>
    <alternativeName>
        <fullName evidence="1">PreQ(0) synthase</fullName>
    </alternativeName>
</protein>
<keyword id="KW-0067">ATP-binding</keyword>
<keyword id="KW-0436">Ligase</keyword>
<keyword id="KW-0479">Metal-binding</keyword>
<keyword id="KW-0547">Nucleotide-binding</keyword>
<keyword id="KW-1185">Reference proteome</keyword>
<keyword id="KW-0862">Zinc</keyword>
<accession>A0B6A6</accession>
<sequence>MGRAVCLCSGGLDSTVAATIARRSGMDVYLIHVSYGQQAERREIEAIERIADAIGASDLMCSRIDLFRNISALTTQGARIPRGEEVSLDSESTPPTWVYCRNTVLLSMAAAYAEYLGAHSIYVGFNAEEAMSYPDNRPEFVEQFNALLEKAVASFSRPPKVVAPLVDMRKKDIVRLGADIKAPLELTWSCYLNGEIHCGTCESCQHRRRGFVEAGIPDPTEYQH</sequence>
<gene>
    <name evidence="1" type="primary">queC</name>
    <name type="ordered locus">Mthe_0438</name>
</gene>
<evidence type="ECO:0000255" key="1">
    <source>
        <dbReference type="HAMAP-Rule" id="MF_01633"/>
    </source>
</evidence>